<name>EX7S_HAEIN</name>
<feature type="chain" id="PRO_0000206953" description="Exodeoxyribonuclease 7 small subunit">
    <location>
        <begin position="1"/>
        <end position="84"/>
    </location>
</feature>
<keyword id="KW-0963">Cytoplasm</keyword>
<keyword id="KW-0269">Exonuclease</keyword>
<keyword id="KW-0378">Hydrolase</keyword>
<keyword id="KW-0540">Nuclease</keyword>
<keyword id="KW-1185">Reference proteome</keyword>
<accession>P43914</accession>
<gene>
    <name evidence="1" type="primary">xseB</name>
    <name type="ordered locus">HI_1437</name>
</gene>
<evidence type="ECO:0000255" key="1">
    <source>
        <dbReference type="HAMAP-Rule" id="MF_00337"/>
    </source>
</evidence>
<evidence type="ECO:0000269" key="2">
    <source>
    </source>
</evidence>
<evidence type="ECO:0000305" key="3"/>
<comment type="function">
    <text evidence="1">Bidirectionally degrades single-stranded DNA into large acid-insoluble oligonucleotides, which are then degraded further into small acid-soluble oligonucleotides.</text>
</comment>
<comment type="catalytic activity">
    <reaction evidence="1">
        <text>Exonucleolytic cleavage in either 5'- to 3'- or 3'- to 5'-direction to yield nucleoside 5'-phosphates.</text>
        <dbReference type="EC" id="3.1.11.6"/>
    </reaction>
</comment>
<comment type="subunit">
    <text evidence="1">Heterooligomer composed of large and small subunits.</text>
</comment>
<comment type="subcellular location">
    <subcellularLocation>
        <location evidence="1">Cytoplasm</location>
    </subcellularLocation>
</comment>
<comment type="disruption phenotype">
    <text evidence="2">Essential, neither gene for this protein can be deleted (PubMed:18242643).</text>
</comment>
<comment type="similarity">
    <text evidence="1 3">Belongs to the XseB family.</text>
</comment>
<protein>
    <recommendedName>
        <fullName evidence="1">Exodeoxyribonuclease 7 small subunit</fullName>
        <ecNumber evidence="1">3.1.11.6</ecNumber>
    </recommendedName>
    <alternativeName>
        <fullName evidence="1">Exodeoxyribonuclease VII small subunit</fullName>
        <shortName evidence="1">Exonuclease VII small subunit</shortName>
    </alternativeName>
</protein>
<dbReference type="EC" id="3.1.11.6" evidence="1"/>
<dbReference type="EMBL" id="L42023">
    <property type="protein sequence ID" value="AAC23086.1"/>
    <property type="molecule type" value="Genomic_DNA"/>
</dbReference>
<dbReference type="PIR" id="A64172">
    <property type="entry name" value="A64172"/>
</dbReference>
<dbReference type="RefSeq" id="NP_439589.1">
    <property type="nucleotide sequence ID" value="NC_000907.1"/>
</dbReference>
<dbReference type="SMR" id="P43914"/>
<dbReference type="STRING" id="71421.HI_1437"/>
<dbReference type="EnsemblBacteria" id="AAC23086">
    <property type="protein sequence ID" value="AAC23086"/>
    <property type="gene ID" value="HI_1437"/>
</dbReference>
<dbReference type="KEGG" id="hin:HI_1437"/>
<dbReference type="PATRIC" id="fig|71421.8.peg.1499"/>
<dbReference type="eggNOG" id="COG1722">
    <property type="taxonomic scope" value="Bacteria"/>
</dbReference>
<dbReference type="HOGENOM" id="CLU_145918_3_3_6"/>
<dbReference type="OrthoDB" id="5591562at2"/>
<dbReference type="PhylomeDB" id="P43914"/>
<dbReference type="BioCyc" id="HINF71421:G1GJ1-1463-MONOMER"/>
<dbReference type="Proteomes" id="UP000000579">
    <property type="component" value="Chromosome"/>
</dbReference>
<dbReference type="GO" id="GO:0005829">
    <property type="term" value="C:cytosol"/>
    <property type="evidence" value="ECO:0000318"/>
    <property type="project" value="GO_Central"/>
</dbReference>
<dbReference type="GO" id="GO:0009318">
    <property type="term" value="C:exodeoxyribonuclease VII complex"/>
    <property type="evidence" value="ECO:0007669"/>
    <property type="project" value="InterPro"/>
</dbReference>
<dbReference type="GO" id="GO:0008855">
    <property type="term" value="F:exodeoxyribonuclease VII activity"/>
    <property type="evidence" value="ECO:0000318"/>
    <property type="project" value="GO_Central"/>
</dbReference>
<dbReference type="GO" id="GO:0006308">
    <property type="term" value="P:DNA catabolic process"/>
    <property type="evidence" value="ECO:0007669"/>
    <property type="project" value="UniProtKB-UniRule"/>
</dbReference>
<dbReference type="FunFam" id="1.10.287.1040:FF:000001">
    <property type="entry name" value="Exodeoxyribonuclease 7 small subunit"/>
    <property type="match status" value="1"/>
</dbReference>
<dbReference type="Gene3D" id="1.10.287.1040">
    <property type="entry name" value="Exonuclease VII, small subunit"/>
    <property type="match status" value="1"/>
</dbReference>
<dbReference type="HAMAP" id="MF_00337">
    <property type="entry name" value="Exonuc_7_S"/>
    <property type="match status" value="1"/>
</dbReference>
<dbReference type="InterPro" id="IPR003761">
    <property type="entry name" value="Exonuc_VII_S"/>
</dbReference>
<dbReference type="InterPro" id="IPR037004">
    <property type="entry name" value="Exonuc_VII_ssu_sf"/>
</dbReference>
<dbReference type="NCBIfam" id="NF002137">
    <property type="entry name" value="PRK00977.1-1"/>
    <property type="match status" value="1"/>
</dbReference>
<dbReference type="NCBIfam" id="NF002140">
    <property type="entry name" value="PRK00977.1-4"/>
    <property type="match status" value="1"/>
</dbReference>
<dbReference type="NCBIfam" id="TIGR01280">
    <property type="entry name" value="xseB"/>
    <property type="match status" value="1"/>
</dbReference>
<dbReference type="PANTHER" id="PTHR34137">
    <property type="entry name" value="EXODEOXYRIBONUCLEASE 7 SMALL SUBUNIT"/>
    <property type="match status" value="1"/>
</dbReference>
<dbReference type="PANTHER" id="PTHR34137:SF1">
    <property type="entry name" value="EXODEOXYRIBONUCLEASE 7 SMALL SUBUNIT"/>
    <property type="match status" value="1"/>
</dbReference>
<dbReference type="Pfam" id="PF02609">
    <property type="entry name" value="Exonuc_VII_S"/>
    <property type="match status" value="1"/>
</dbReference>
<dbReference type="SUPFAM" id="SSF116842">
    <property type="entry name" value="XseB-like"/>
    <property type="match status" value="1"/>
</dbReference>
<reference key="1">
    <citation type="journal article" date="1995" name="Science">
        <title>Whole-genome random sequencing and assembly of Haemophilus influenzae Rd.</title>
        <authorList>
            <person name="Fleischmann R.D."/>
            <person name="Adams M.D."/>
            <person name="White O."/>
            <person name="Clayton R.A."/>
            <person name="Kirkness E.F."/>
            <person name="Kerlavage A.R."/>
            <person name="Bult C.J."/>
            <person name="Tomb J.-F."/>
            <person name="Dougherty B.A."/>
            <person name="Merrick J.M."/>
            <person name="McKenney K."/>
            <person name="Sutton G.G."/>
            <person name="FitzHugh W."/>
            <person name="Fields C.A."/>
            <person name="Gocayne J.D."/>
            <person name="Scott J.D."/>
            <person name="Shirley R."/>
            <person name="Liu L.-I."/>
            <person name="Glodek A."/>
            <person name="Kelley J.M."/>
            <person name="Weidman J.F."/>
            <person name="Phillips C.A."/>
            <person name="Spriggs T."/>
            <person name="Hedblom E."/>
            <person name="Cotton M.D."/>
            <person name="Utterback T.R."/>
            <person name="Hanna M.C."/>
            <person name="Nguyen D.T."/>
            <person name="Saudek D.M."/>
            <person name="Brandon R.C."/>
            <person name="Fine L.D."/>
            <person name="Fritchman J.L."/>
            <person name="Fuhrmann J.L."/>
            <person name="Geoghagen N.S.M."/>
            <person name="Gnehm C.L."/>
            <person name="McDonald L.A."/>
            <person name="Small K.V."/>
            <person name="Fraser C.M."/>
            <person name="Smith H.O."/>
            <person name="Venter J.C."/>
        </authorList>
    </citation>
    <scope>NUCLEOTIDE SEQUENCE [LARGE SCALE GENOMIC DNA]</scope>
    <source>
        <strain>ATCC 51907 / DSM 11121 / KW20 / Rd</strain>
    </source>
</reference>
<reference key="2">
    <citation type="journal article" date="2008" name="Mutat. Res.">
        <title>RecJ, ExoI and RecG are required for genome maintenance but not for generation of genetic diversity by repeat-mediated phase variation in Haemophilus influenzae.</title>
        <authorList>
            <person name="Kumar G.A."/>
            <person name="Woodhall M.R."/>
            <person name="Hood D.W."/>
            <person name="Moxon E.R."/>
            <person name="Bayliss C.D."/>
        </authorList>
    </citation>
    <scope>DISRUPTION PHENOTYPE</scope>
    <source>
        <strain>ATCC 51907 / DSM 11121 / KW20 / Rd</strain>
    </source>
</reference>
<organism>
    <name type="scientific">Haemophilus influenzae (strain ATCC 51907 / DSM 11121 / KW20 / Rd)</name>
    <dbReference type="NCBI Taxonomy" id="71421"/>
    <lineage>
        <taxon>Bacteria</taxon>
        <taxon>Pseudomonadati</taxon>
        <taxon>Pseudomonadota</taxon>
        <taxon>Gammaproteobacteria</taxon>
        <taxon>Pasteurellales</taxon>
        <taxon>Pasteurellaceae</taxon>
        <taxon>Haemophilus</taxon>
    </lineage>
</organism>
<sequence length="84" mass="9512">MARKPASSQDFETTLVQLENIVTHLENGDLPLEEALKEFEQGVQLAKLGQERLQQAEQRIQILLQKTEDAPLNDYKGNDYEGNA</sequence>
<proteinExistence type="inferred from homology"/>